<dbReference type="EMBL" id="AAFI02000013">
    <property type="protein sequence ID" value="EAL69522.1"/>
    <property type="molecule type" value="Genomic_DNA"/>
</dbReference>
<dbReference type="RefSeq" id="XP_643498.1">
    <property type="nucleotide sequence ID" value="XM_638406.1"/>
</dbReference>
<dbReference type="FunCoup" id="Q8MXN7">
    <property type="interactions" value="279"/>
</dbReference>
<dbReference type="STRING" id="44689.Q8MXN7"/>
<dbReference type="GlyGen" id="Q8MXN7">
    <property type="glycosylation" value="2 sites"/>
</dbReference>
<dbReference type="PaxDb" id="44689-DDB0167276"/>
<dbReference type="EnsemblProtists" id="EAL69522">
    <property type="protein sequence ID" value="EAL69522"/>
    <property type="gene ID" value="DDB_G0275543"/>
</dbReference>
<dbReference type="GeneID" id="8620079"/>
<dbReference type="KEGG" id="ddi:DDB_G0275543"/>
<dbReference type="dictyBase" id="DDB_G0275543"/>
<dbReference type="VEuPathDB" id="AmoebaDB:DDB_G0275543"/>
<dbReference type="eggNOG" id="KOG3140">
    <property type="taxonomic scope" value="Eukaryota"/>
</dbReference>
<dbReference type="HOGENOM" id="CLU_038944_0_1_1"/>
<dbReference type="InParanoid" id="Q8MXN7"/>
<dbReference type="OMA" id="CIKIPRD"/>
<dbReference type="PhylomeDB" id="Q8MXN7"/>
<dbReference type="PRO" id="PR:Q8MXN7"/>
<dbReference type="Proteomes" id="UP000002195">
    <property type="component" value="Chromosome 2"/>
</dbReference>
<dbReference type="GO" id="GO:0005789">
    <property type="term" value="C:endoplasmic reticulum membrane"/>
    <property type="evidence" value="ECO:0000318"/>
    <property type="project" value="GO_Central"/>
</dbReference>
<dbReference type="GO" id="GO:0000045">
    <property type="term" value="P:autophagosome assembly"/>
    <property type="evidence" value="ECO:0000318"/>
    <property type="project" value="GO_Central"/>
</dbReference>
<dbReference type="InterPro" id="IPR045014">
    <property type="entry name" value="TM41A/B"/>
</dbReference>
<dbReference type="InterPro" id="IPR032816">
    <property type="entry name" value="VTT_dom"/>
</dbReference>
<dbReference type="PANTHER" id="PTHR43220">
    <property type="match status" value="1"/>
</dbReference>
<dbReference type="PANTHER" id="PTHR43220:SF18">
    <property type="entry name" value="TRANSMEMBRANE PROTEIN 41B"/>
    <property type="match status" value="1"/>
</dbReference>
<dbReference type="Pfam" id="PF09335">
    <property type="entry name" value="VTT_dom"/>
    <property type="match status" value="1"/>
</dbReference>
<name>TM41_DICDI</name>
<gene>
    <name type="ORF">DDB_G0275543</name>
</gene>
<accession>Q8MXN7</accession>
<accession>Q553C2</accession>
<evidence type="ECO:0000255" key="1"/>
<evidence type="ECO:0000256" key="2">
    <source>
        <dbReference type="SAM" id="MobiDB-lite"/>
    </source>
</evidence>
<evidence type="ECO:0000305" key="3"/>
<comment type="subcellular location">
    <subcellularLocation>
        <location evidence="3">Membrane</location>
        <topology evidence="3">Multi-pass membrane protein</topology>
    </subcellularLocation>
</comment>
<comment type="similarity">
    <text evidence="3">Belongs to the TMEM41 family.</text>
</comment>
<sequence>MEIDNQNINNINNNNIHNNINNNNINKRNIENNINNINNINNNISMKNKNNNIDNKKNSNNNNNNNNNNNNKNSISNNNNNNNKSFGLYSLEQPAPLPLWLLVIVFGVSISVIVFLFLNFPSLSPQHKQLIRLPKNFKDVKLLSDILSQYTDDNYFIVITTFGVIYTFLQAFSIPGSVFLSFLSGGLFGLKVGFPLVCFVATLGATFSYLISYYIGRNLVRKLFPDKLKLFSDSLSQKRDNLLNYIVFLRITPFLPNWFINLASPLLDVPIHTFAIGTFIGIMPATFLAVKAGIQIQNIQNPSDIFDLKSILTMAALALLSILPTLIQKKLKVN</sequence>
<reference key="1">
    <citation type="journal article" date="2002" name="Nature">
        <title>Sequence and analysis of chromosome 2 of Dictyostelium discoideum.</title>
        <authorList>
            <person name="Gloeckner G."/>
            <person name="Eichinger L."/>
            <person name="Szafranski K."/>
            <person name="Pachebat J.A."/>
            <person name="Bankier A.T."/>
            <person name="Dear P.H."/>
            <person name="Lehmann R."/>
            <person name="Baumgart C."/>
            <person name="Parra G."/>
            <person name="Abril J.F."/>
            <person name="Guigo R."/>
            <person name="Kumpf K."/>
            <person name="Tunggal B."/>
            <person name="Cox E.C."/>
            <person name="Quail M.A."/>
            <person name="Platzer M."/>
            <person name="Rosenthal A."/>
            <person name="Noegel A.A."/>
        </authorList>
    </citation>
    <scope>NUCLEOTIDE SEQUENCE [LARGE SCALE GENOMIC DNA]</scope>
    <source>
        <strain>AX4</strain>
    </source>
</reference>
<reference key="2">
    <citation type="journal article" date="2005" name="Nature">
        <title>The genome of the social amoeba Dictyostelium discoideum.</title>
        <authorList>
            <person name="Eichinger L."/>
            <person name="Pachebat J.A."/>
            <person name="Gloeckner G."/>
            <person name="Rajandream M.A."/>
            <person name="Sucgang R."/>
            <person name="Berriman M."/>
            <person name="Song J."/>
            <person name="Olsen R."/>
            <person name="Szafranski K."/>
            <person name="Xu Q."/>
            <person name="Tunggal B."/>
            <person name="Kummerfeld S."/>
            <person name="Madera M."/>
            <person name="Konfortov B.A."/>
            <person name="Rivero F."/>
            <person name="Bankier A.T."/>
            <person name="Lehmann R."/>
            <person name="Hamlin N."/>
            <person name="Davies R."/>
            <person name="Gaudet P."/>
            <person name="Fey P."/>
            <person name="Pilcher K."/>
            <person name="Chen G."/>
            <person name="Saunders D."/>
            <person name="Sodergren E.J."/>
            <person name="Davis P."/>
            <person name="Kerhornou A."/>
            <person name="Nie X."/>
            <person name="Hall N."/>
            <person name="Anjard C."/>
            <person name="Hemphill L."/>
            <person name="Bason N."/>
            <person name="Farbrother P."/>
            <person name="Desany B."/>
            <person name="Just E."/>
            <person name="Morio T."/>
            <person name="Rost R."/>
            <person name="Churcher C.M."/>
            <person name="Cooper J."/>
            <person name="Haydock S."/>
            <person name="van Driessche N."/>
            <person name="Cronin A."/>
            <person name="Goodhead I."/>
            <person name="Muzny D.M."/>
            <person name="Mourier T."/>
            <person name="Pain A."/>
            <person name="Lu M."/>
            <person name="Harper D."/>
            <person name="Lindsay R."/>
            <person name="Hauser H."/>
            <person name="James K.D."/>
            <person name="Quiles M."/>
            <person name="Madan Babu M."/>
            <person name="Saito T."/>
            <person name="Buchrieser C."/>
            <person name="Wardroper A."/>
            <person name="Felder M."/>
            <person name="Thangavelu M."/>
            <person name="Johnson D."/>
            <person name="Knights A."/>
            <person name="Loulseged H."/>
            <person name="Mungall K.L."/>
            <person name="Oliver K."/>
            <person name="Price C."/>
            <person name="Quail M.A."/>
            <person name="Urushihara H."/>
            <person name="Hernandez J."/>
            <person name="Rabbinowitsch E."/>
            <person name="Steffen D."/>
            <person name="Sanders M."/>
            <person name="Ma J."/>
            <person name="Kohara Y."/>
            <person name="Sharp S."/>
            <person name="Simmonds M.N."/>
            <person name="Spiegler S."/>
            <person name="Tivey A."/>
            <person name="Sugano S."/>
            <person name="White B."/>
            <person name="Walker D."/>
            <person name="Woodward J.R."/>
            <person name="Winckler T."/>
            <person name="Tanaka Y."/>
            <person name="Shaulsky G."/>
            <person name="Schleicher M."/>
            <person name="Weinstock G.M."/>
            <person name="Rosenthal A."/>
            <person name="Cox E.C."/>
            <person name="Chisholm R.L."/>
            <person name="Gibbs R.A."/>
            <person name="Loomis W.F."/>
            <person name="Platzer M."/>
            <person name="Kay R.R."/>
            <person name="Williams J.G."/>
            <person name="Dear P.H."/>
            <person name="Noegel A.A."/>
            <person name="Barrell B.G."/>
            <person name="Kuspa A."/>
        </authorList>
    </citation>
    <scope>NUCLEOTIDE SEQUENCE [LARGE SCALE GENOMIC DNA]</scope>
    <source>
        <strain>AX4</strain>
    </source>
</reference>
<proteinExistence type="inferred from homology"/>
<organism>
    <name type="scientific">Dictyostelium discoideum</name>
    <name type="common">Social amoeba</name>
    <dbReference type="NCBI Taxonomy" id="44689"/>
    <lineage>
        <taxon>Eukaryota</taxon>
        <taxon>Amoebozoa</taxon>
        <taxon>Evosea</taxon>
        <taxon>Eumycetozoa</taxon>
        <taxon>Dictyostelia</taxon>
        <taxon>Dictyosteliales</taxon>
        <taxon>Dictyosteliaceae</taxon>
        <taxon>Dictyostelium</taxon>
    </lineage>
</organism>
<feature type="chain" id="PRO_0000356848" description="Transmembrane protein 41 homolog">
    <location>
        <begin position="1"/>
        <end position="334"/>
    </location>
</feature>
<feature type="transmembrane region" description="Helical" evidence="1">
    <location>
        <begin position="97"/>
        <end position="117"/>
    </location>
</feature>
<feature type="transmembrane region" description="Helical" evidence="1">
    <location>
        <begin position="156"/>
        <end position="176"/>
    </location>
</feature>
<feature type="transmembrane region" description="Helical" evidence="1">
    <location>
        <begin position="192"/>
        <end position="214"/>
    </location>
</feature>
<feature type="transmembrane region" description="Helical" evidence="1">
    <location>
        <begin position="246"/>
        <end position="266"/>
    </location>
</feature>
<feature type="transmembrane region" description="Helical" evidence="1">
    <location>
        <begin position="269"/>
        <end position="289"/>
    </location>
</feature>
<feature type="transmembrane region" description="Helical" evidence="1">
    <location>
        <begin position="305"/>
        <end position="325"/>
    </location>
</feature>
<feature type="region of interest" description="Disordered" evidence="2">
    <location>
        <begin position="47"/>
        <end position="79"/>
    </location>
</feature>
<feature type="glycosylation site" description="N-linked (GlcNAc...) asparagine" evidence="1">
    <location>
        <position position="43"/>
    </location>
</feature>
<feature type="glycosylation site" description="N-linked (GlcNAc...) asparagine" evidence="1">
    <location>
        <position position="83"/>
    </location>
</feature>
<protein>
    <recommendedName>
        <fullName>Transmembrane protein 41 homolog</fullName>
    </recommendedName>
</protein>
<keyword id="KW-0325">Glycoprotein</keyword>
<keyword id="KW-0472">Membrane</keyword>
<keyword id="KW-1185">Reference proteome</keyword>
<keyword id="KW-0812">Transmembrane</keyword>
<keyword id="KW-1133">Transmembrane helix</keyword>